<name>KAX99_BUTIS</name>
<evidence type="ECO:0000250" key="1"/>
<evidence type="ECO:0000250" key="2">
    <source>
        <dbReference type="UniProtKB" id="Q9NJP7"/>
    </source>
</evidence>
<evidence type="ECO:0000255" key="3"/>
<evidence type="ECO:0000269" key="4">
    <source ref="1"/>
</evidence>
<evidence type="ECO:0000305" key="5"/>
<evidence type="ECO:0000305" key="6">
    <source ref="1"/>
</evidence>
<evidence type="ECO:0000312" key="7">
    <source>
        <dbReference type="EMBL" id="ACJ23142.1"/>
    </source>
</evidence>
<reference key="1">
    <citation type="submission" date="2008-10" db="EMBL/GenBank/DDBJ databases">
        <title>Buthus occitanus israelis scorpion toxin.</title>
        <authorList>
            <person name="Zilberberg N."/>
            <person name="Kozminsky-Atias A."/>
        </authorList>
    </citation>
    <scope>NUCLEOTIDE SEQUENCE [MRNA]</scope>
    <source>
        <tissue>Venom gland</tissue>
    </source>
</reference>
<protein>
    <recommendedName>
        <fullName evidence="5">Potassium channel toxin alpha-KTx 9.9</fullName>
    </recommendedName>
    <alternativeName>
        <fullName evidence="7">Toxin Tx549</fullName>
    </alternativeName>
</protein>
<proteinExistence type="evidence at transcript level"/>
<sequence>KKTSRLFTLVLIVLAMNVMMAIISDPVVEAVGCEECPMHCKGKMAKPTCYDGVCNCNV</sequence>
<accession>B8XH33</accession>
<keyword id="KW-1015">Disulfide bond</keyword>
<keyword id="KW-0872">Ion channel impairing toxin</keyword>
<keyword id="KW-0528">Neurotoxin</keyword>
<keyword id="KW-0632">Potassium channel impairing toxin</keyword>
<keyword id="KW-0964">Secreted</keyword>
<keyword id="KW-0732">Signal</keyword>
<keyword id="KW-0800">Toxin</keyword>
<dbReference type="EMBL" id="FJ360822">
    <property type="protein sequence ID" value="ACJ23142.1"/>
    <property type="status" value="ALT_INIT"/>
    <property type="molecule type" value="mRNA"/>
</dbReference>
<dbReference type="SMR" id="B8XH33"/>
<dbReference type="GO" id="GO:0005576">
    <property type="term" value="C:extracellular region"/>
    <property type="evidence" value="ECO:0007669"/>
    <property type="project" value="UniProtKB-SubCell"/>
</dbReference>
<dbReference type="GO" id="GO:0008200">
    <property type="term" value="F:ion channel inhibitor activity"/>
    <property type="evidence" value="ECO:0007669"/>
    <property type="project" value="InterPro"/>
</dbReference>
<dbReference type="GO" id="GO:0015459">
    <property type="term" value="F:potassium channel regulator activity"/>
    <property type="evidence" value="ECO:0007669"/>
    <property type="project" value="UniProtKB-KW"/>
</dbReference>
<dbReference type="GO" id="GO:0090729">
    <property type="term" value="F:toxin activity"/>
    <property type="evidence" value="ECO:0007669"/>
    <property type="project" value="UniProtKB-KW"/>
</dbReference>
<dbReference type="InterPro" id="IPR036574">
    <property type="entry name" value="Scorpion_toxin-like_sf"/>
</dbReference>
<dbReference type="InterPro" id="IPR008911">
    <property type="entry name" value="Toxin_alpha-KTx_8/9"/>
</dbReference>
<dbReference type="Pfam" id="PF05453">
    <property type="entry name" value="Toxin_6"/>
    <property type="match status" value="1"/>
</dbReference>
<dbReference type="SUPFAM" id="SSF57095">
    <property type="entry name" value="Scorpion toxin-like"/>
    <property type="match status" value="1"/>
</dbReference>
<organism>
    <name type="scientific">Buthus israelis</name>
    <name type="common">Israeli scorpion</name>
    <name type="synonym">Buthus occitanus israelis</name>
    <dbReference type="NCBI Taxonomy" id="2899555"/>
    <lineage>
        <taxon>Eukaryota</taxon>
        <taxon>Metazoa</taxon>
        <taxon>Ecdysozoa</taxon>
        <taxon>Arthropoda</taxon>
        <taxon>Chelicerata</taxon>
        <taxon>Arachnida</taxon>
        <taxon>Scorpiones</taxon>
        <taxon>Buthida</taxon>
        <taxon>Buthoidea</taxon>
        <taxon>Buthidae</taxon>
        <taxon>Buthus</taxon>
    </lineage>
</organism>
<comment type="function">
    <text evidence="1">Potassium channel inhibitor.</text>
</comment>
<comment type="subcellular location">
    <subcellularLocation>
        <location evidence="6">Secreted</location>
    </subcellularLocation>
</comment>
<comment type="tissue specificity">
    <text evidence="6">Expressed by the venom gland.</text>
</comment>
<comment type="domain">
    <text evidence="2">Has the structural arrangement of an alpha-helix connected to a beta-sheet by disulfide bonds (CSalpha/beta).</text>
</comment>
<comment type="similarity">
    <text evidence="5">Belongs to the short scorpion toxin superfamily. Potassium channel inhibitor family. Alpha-KTx 09 subfamily.</text>
</comment>
<comment type="sequence caution" evidence="5">
    <conflict type="erroneous initiation">
        <sequence resource="EMBL-CDS" id="ACJ23142"/>
    </conflict>
    <text>Truncated N-terminus.</text>
</comment>
<feature type="signal peptide" evidence="3">
    <location>
        <begin position="1" status="less than"/>
        <end position="21"/>
    </location>
</feature>
<feature type="propeptide" id="PRO_0000428963" evidence="1">
    <location>
        <begin position="22"/>
        <end position="30"/>
    </location>
</feature>
<feature type="peptide" id="PRO_0000428964" description="Potassium channel toxin alpha-KTx 9.9" evidence="4">
    <location>
        <begin position="31"/>
        <end position="58"/>
    </location>
</feature>
<feature type="disulfide bond" evidence="2">
    <location>
        <begin position="33"/>
        <end position="49"/>
    </location>
</feature>
<feature type="disulfide bond" evidence="2">
    <location>
        <begin position="36"/>
        <end position="54"/>
    </location>
</feature>
<feature type="disulfide bond" evidence="2">
    <location>
        <begin position="40"/>
        <end position="56"/>
    </location>
</feature>
<feature type="non-terminal residue">
    <location>
        <position position="1"/>
    </location>
</feature>